<name>MIAB_RICCK</name>
<reference key="1">
    <citation type="submission" date="2007-09" db="EMBL/GenBank/DDBJ databases">
        <title>Complete genome sequence of Rickettsia canadensis.</title>
        <authorList>
            <person name="Madan A."/>
            <person name="Fahey J."/>
            <person name="Helton E."/>
            <person name="Ketteman M."/>
            <person name="Madan A."/>
            <person name="Rodrigues S."/>
            <person name="Sanchez A."/>
            <person name="Whiting M."/>
            <person name="Dasch G."/>
            <person name="Eremeeva M."/>
        </authorList>
    </citation>
    <scope>NUCLEOTIDE SEQUENCE [LARGE SCALE GENOMIC DNA]</scope>
    <source>
        <strain>McKiel</strain>
    </source>
</reference>
<sequence length="446" mass="50831">MSKKLYIKTYGCQMNVYDSVKMQDLLYPFGYESTENIKEADVIILNTCHIREKAAEKIYSELGRIKKLQDTRKKHGLSSAIIVVAGCVAQAEGEEIFTRTPYVDIVVGPQSYYNLPELISKVVRHEKHLIDLDFVEEAKFDQLPEQLYPQGASAFISVQEGCDKFCTFCVVPYTRGVEFSRNVEQVYREALKVVSNGAREIMLLGQNVNAYHGKGVDDKIFSLADLIRYLAQIPNLERLRYTTSHPIDMTDDLIKLHSIESKLMPFVHLPVQSGSNKILKAMNRKHDREYYFNIINRLREARPDIVLSSDFIVGFPGETDEDFEDTLDLVRKIKYGQCYSFKYSPRPGTPGATRTDQIPEHIKSERLTILQKELSSQQLAFNESCVGSTMKVLFDRSGKFDGQIIGKTPYMQSVYINNTNQDLLCKIIDVKITKATSNSLTGEIYT</sequence>
<comment type="function">
    <text evidence="1">Catalyzes the methylthiolation of N6-(dimethylallyl)adenosine (i(6)A), leading to the formation of 2-methylthio-N6-(dimethylallyl)adenosine (ms(2)i(6)A) at position 37 in tRNAs that read codons beginning with uridine.</text>
</comment>
<comment type="catalytic activity">
    <reaction evidence="1">
        <text>N(6)-dimethylallyladenosine(37) in tRNA + (sulfur carrier)-SH + AH2 + 2 S-adenosyl-L-methionine = 2-methylsulfanyl-N(6)-dimethylallyladenosine(37) in tRNA + (sulfur carrier)-H + 5'-deoxyadenosine + L-methionine + A + S-adenosyl-L-homocysteine + 2 H(+)</text>
        <dbReference type="Rhea" id="RHEA:37067"/>
        <dbReference type="Rhea" id="RHEA-COMP:10375"/>
        <dbReference type="Rhea" id="RHEA-COMP:10376"/>
        <dbReference type="Rhea" id="RHEA-COMP:14737"/>
        <dbReference type="Rhea" id="RHEA-COMP:14739"/>
        <dbReference type="ChEBI" id="CHEBI:13193"/>
        <dbReference type="ChEBI" id="CHEBI:15378"/>
        <dbReference type="ChEBI" id="CHEBI:17319"/>
        <dbReference type="ChEBI" id="CHEBI:17499"/>
        <dbReference type="ChEBI" id="CHEBI:29917"/>
        <dbReference type="ChEBI" id="CHEBI:57844"/>
        <dbReference type="ChEBI" id="CHEBI:57856"/>
        <dbReference type="ChEBI" id="CHEBI:59789"/>
        <dbReference type="ChEBI" id="CHEBI:64428"/>
        <dbReference type="ChEBI" id="CHEBI:74415"/>
        <dbReference type="ChEBI" id="CHEBI:74417"/>
        <dbReference type="EC" id="2.8.4.3"/>
    </reaction>
</comment>
<comment type="cofactor">
    <cofactor evidence="1">
        <name>[4Fe-4S] cluster</name>
        <dbReference type="ChEBI" id="CHEBI:49883"/>
    </cofactor>
    <text evidence="1">Binds 2 [4Fe-4S] clusters. One cluster is coordinated with 3 cysteines and an exchangeable S-adenosyl-L-methionine.</text>
</comment>
<comment type="subunit">
    <text evidence="1">Monomer.</text>
</comment>
<comment type="subcellular location">
    <subcellularLocation>
        <location evidence="1">Cytoplasm</location>
    </subcellularLocation>
</comment>
<comment type="similarity">
    <text evidence="1">Belongs to the methylthiotransferase family. MiaB subfamily.</text>
</comment>
<dbReference type="EC" id="2.8.4.3" evidence="1"/>
<dbReference type="EMBL" id="CP000409">
    <property type="protein sequence ID" value="ABV73944.1"/>
    <property type="molecule type" value="Genomic_DNA"/>
</dbReference>
<dbReference type="RefSeq" id="WP_012149139.1">
    <property type="nucleotide sequence ID" value="NC_009879.1"/>
</dbReference>
<dbReference type="SMR" id="A8F011"/>
<dbReference type="STRING" id="293613.A1E_05140"/>
<dbReference type="KEGG" id="rcm:A1E_05140"/>
<dbReference type="eggNOG" id="COG0621">
    <property type="taxonomic scope" value="Bacteria"/>
</dbReference>
<dbReference type="HOGENOM" id="CLU_018697_2_0_5"/>
<dbReference type="Proteomes" id="UP000007056">
    <property type="component" value="Chromosome"/>
</dbReference>
<dbReference type="GO" id="GO:0005829">
    <property type="term" value="C:cytosol"/>
    <property type="evidence" value="ECO:0007669"/>
    <property type="project" value="TreeGrafter"/>
</dbReference>
<dbReference type="GO" id="GO:0051539">
    <property type="term" value="F:4 iron, 4 sulfur cluster binding"/>
    <property type="evidence" value="ECO:0007669"/>
    <property type="project" value="UniProtKB-UniRule"/>
</dbReference>
<dbReference type="GO" id="GO:0046872">
    <property type="term" value="F:metal ion binding"/>
    <property type="evidence" value="ECO:0007669"/>
    <property type="project" value="UniProtKB-KW"/>
</dbReference>
<dbReference type="GO" id="GO:0035597">
    <property type="term" value="F:N6-isopentenyladenosine methylthiotransferase activity"/>
    <property type="evidence" value="ECO:0007669"/>
    <property type="project" value="TreeGrafter"/>
</dbReference>
<dbReference type="CDD" id="cd01335">
    <property type="entry name" value="Radical_SAM"/>
    <property type="match status" value="1"/>
</dbReference>
<dbReference type="FunFam" id="3.40.50.12160:FF:000001">
    <property type="entry name" value="tRNA-2-methylthio-N(6)-dimethylallyladenosine synthase"/>
    <property type="match status" value="1"/>
</dbReference>
<dbReference type="FunFam" id="3.80.30.20:FF:000001">
    <property type="entry name" value="tRNA-2-methylthio-N(6)-dimethylallyladenosine synthase 2"/>
    <property type="match status" value="1"/>
</dbReference>
<dbReference type="Gene3D" id="3.40.50.12160">
    <property type="entry name" value="Methylthiotransferase, N-terminal domain"/>
    <property type="match status" value="1"/>
</dbReference>
<dbReference type="Gene3D" id="3.80.30.20">
    <property type="entry name" value="tm_1862 like domain"/>
    <property type="match status" value="1"/>
</dbReference>
<dbReference type="HAMAP" id="MF_01864">
    <property type="entry name" value="tRNA_metthiotr_MiaB"/>
    <property type="match status" value="1"/>
</dbReference>
<dbReference type="InterPro" id="IPR006638">
    <property type="entry name" value="Elp3/MiaA/NifB-like_rSAM"/>
</dbReference>
<dbReference type="InterPro" id="IPR005839">
    <property type="entry name" value="Methylthiotransferase"/>
</dbReference>
<dbReference type="InterPro" id="IPR020612">
    <property type="entry name" value="Methylthiotransferase_CS"/>
</dbReference>
<dbReference type="InterPro" id="IPR013848">
    <property type="entry name" value="Methylthiotransferase_N"/>
</dbReference>
<dbReference type="InterPro" id="IPR038135">
    <property type="entry name" value="Methylthiotransferase_N_sf"/>
</dbReference>
<dbReference type="InterPro" id="IPR006463">
    <property type="entry name" value="MiaB_methiolase"/>
</dbReference>
<dbReference type="InterPro" id="IPR007197">
    <property type="entry name" value="rSAM"/>
</dbReference>
<dbReference type="InterPro" id="IPR023404">
    <property type="entry name" value="rSAM_horseshoe"/>
</dbReference>
<dbReference type="InterPro" id="IPR002792">
    <property type="entry name" value="TRAM_dom"/>
</dbReference>
<dbReference type="NCBIfam" id="TIGR01574">
    <property type="entry name" value="miaB-methiolase"/>
    <property type="match status" value="1"/>
</dbReference>
<dbReference type="NCBIfam" id="TIGR00089">
    <property type="entry name" value="MiaB/RimO family radical SAM methylthiotransferase"/>
    <property type="match status" value="1"/>
</dbReference>
<dbReference type="PANTHER" id="PTHR43020">
    <property type="entry name" value="CDK5 REGULATORY SUBUNIT-ASSOCIATED PROTEIN 1"/>
    <property type="match status" value="1"/>
</dbReference>
<dbReference type="PANTHER" id="PTHR43020:SF2">
    <property type="entry name" value="MITOCHONDRIAL TRNA METHYLTHIOTRANSFERASE CDK5RAP1"/>
    <property type="match status" value="1"/>
</dbReference>
<dbReference type="Pfam" id="PF04055">
    <property type="entry name" value="Radical_SAM"/>
    <property type="match status" value="1"/>
</dbReference>
<dbReference type="Pfam" id="PF01938">
    <property type="entry name" value="TRAM"/>
    <property type="match status" value="1"/>
</dbReference>
<dbReference type="Pfam" id="PF00919">
    <property type="entry name" value="UPF0004"/>
    <property type="match status" value="1"/>
</dbReference>
<dbReference type="SFLD" id="SFLDF00273">
    <property type="entry name" value="(dimethylallyl)adenosine_tRNA"/>
    <property type="match status" value="1"/>
</dbReference>
<dbReference type="SFLD" id="SFLDG01082">
    <property type="entry name" value="B12-binding_domain_containing"/>
    <property type="match status" value="1"/>
</dbReference>
<dbReference type="SFLD" id="SFLDG01061">
    <property type="entry name" value="methylthiotransferase"/>
    <property type="match status" value="1"/>
</dbReference>
<dbReference type="SMART" id="SM00729">
    <property type="entry name" value="Elp3"/>
    <property type="match status" value="1"/>
</dbReference>
<dbReference type="SUPFAM" id="SSF102114">
    <property type="entry name" value="Radical SAM enzymes"/>
    <property type="match status" value="1"/>
</dbReference>
<dbReference type="PROSITE" id="PS51449">
    <property type="entry name" value="MTTASE_N"/>
    <property type="match status" value="1"/>
</dbReference>
<dbReference type="PROSITE" id="PS01278">
    <property type="entry name" value="MTTASE_RADICAL"/>
    <property type="match status" value="1"/>
</dbReference>
<dbReference type="PROSITE" id="PS51918">
    <property type="entry name" value="RADICAL_SAM"/>
    <property type="match status" value="1"/>
</dbReference>
<dbReference type="PROSITE" id="PS50926">
    <property type="entry name" value="TRAM"/>
    <property type="match status" value="1"/>
</dbReference>
<keyword id="KW-0004">4Fe-4S</keyword>
<keyword id="KW-0963">Cytoplasm</keyword>
<keyword id="KW-0408">Iron</keyword>
<keyword id="KW-0411">Iron-sulfur</keyword>
<keyword id="KW-0479">Metal-binding</keyword>
<keyword id="KW-0949">S-adenosyl-L-methionine</keyword>
<keyword id="KW-0808">Transferase</keyword>
<keyword id="KW-0819">tRNA processing</keyword>
<organism>
    <name type="scientific">Rickettsia canadensis (strain McKiel)</name>
    <dbReference type="NCBI Taxonomy" id="293613"/>
    <lineage>
        <taxon>Bacteria</taxon>
        <taxon>Pseudomonadati</taxon>
        <taxon>Pseudomonadota</taxon>
        <taxon>Alphaproteobacteria</taxon>
        <taxon>Rickettsiales</taxon>
        <taxon>Rickettsiaceae</taxon>
        <taxon>Rickettsieae</taxon>
        <taxon>Rickettsia</taxon>
        <taxon>belli group</taxon>
    </lineage>
</organism>
<accession>A8F011</accession>
<gene>
    <name evidence="1" type="primary">miaB</name>
    <name type="ordered locus">A1E_05140</name>
</gene>
<protein>
    <recommendedName>
        <fullName evidence="1">tRNA-2-methylthio-N(6)-dimethylallyladenosine synthase</fullName>
        <ecNumber evidence="1">2.8.4.3</ecNumber>
    </recommendedName>
    <alternativeName>
        <fullName evidence="1">(Dimethylallyl)adenosine tRNA methylthiotransferase MiaB</fullName>
    </alternativeName>
    <alternativeName>
        <fullName evidence="1">tRNA-i(6)A37 methylthiotransferase</fullName>
    </alternativeName>
</protein>
<evidence type="ECO:0000255" key="1">
    <source>
        <dbReference type="HAMAP-Rule" id="MF_01864"/>
    </source>
</evidence>
<evidence type="ECO:0000255" key="2">
    <source>
        <dbReference type="PROSITE-ProRule" id="PRU01266"/>
    </source>
</evidence>
<feature type="chain" id="PRO_0000374504" description="tRNA-2-methylthio-N(6)-dimethylallyladenosine synthase">
    <location>
        <begin position="1"/>
        <end position="446"/>
    </location>
</feature>
<feature type="domain" description="MTTase N-terminal" evidence="1">
    <location>
        <begin position="3"/>
        <end position="124"/>
    </location>
</feature>
<feature type="domain" description="Radical SAM core" evidence="2">
    <location>
        <begin position="148"/>
        <end position="380"/>
    </location>
</feature>
<feature type="domain" description="TRAM" evidence="1">
    <location>
        <begin position="383"/>
        <end position="446"/>
    </location>
</feature>
<feature type="binding site" evidence="1">
    <location>
        <position position="12"/>
    </location>
    <ligand>
        <name>[4Fe-4S] cluster</name>
        <dbReference type="ChEBI" id="CHEBI:49883"/>
        <label>1</label>
    </ligand>
</feature>
<feature type="binding site" evidence="1">
    <location>
        <position position="48"/>
    </location>
    <ligand>
        <name>[4Fe-4S] cluster</name>
        <dbReference type="ChEBI" id="CHEBI:49883"/>
        <label>1</label>
    </ligand>
</feature>
<feature type="binding site" evidence="1">
    <location>
        <position position="87"/>
    </location>
    <ligand>
        <name>[4Fe-4S] cluster</name>
        <dbReference type="ChEBI" id="CHEBI:49883"/>
        <label>1</label>
    </ligand>
</feature>
<feature type="binding site" evidence="1">
    <location>
        <position position="162"/>
    </location>
    <ligand>
        <name>[4Fe-4S] cluster</name>
        <dbReference type="ChEBI" id="CHEBI:49883"/>
        <label>2</label>
        <note>4Fe-4S-S-AdoMet</note>
    </ligand>
</feature>
<feature type="binding site" evidence="1">
    <location>
        <position position="166"/>
    </location>
    <ligand>
        <name>[4Fe-4S] cluster</name>
        <dbReference type="ChEBI" id="CHEBI:49883"/>
        <label>2</label>
        <note>4Fe-4S-S-AdoMet</note>
    </ligand>
</feature>
<feature type="binding site" evidence="1">
    <location>
        <position position="169"/>
    </location>
    <ligand>
        <name>[4Fe-4S] cluster</name>
        <dbReference type="ChEBI" id="CHEBI:49883"/>
        <label>2</label>
        <note>4Fe-4S-S-AdoMet</note>
    </ligand>
</feature>
<proteinExistence type="inferred from homology"/>